<feature type="chain" id="PRO_0000317132" description="Probable zinc transporter zip2">
    <location>
        <begin position="1"/>
        <end position="389"/>
    </location>
</feature>
<feature type="transmembrane region" description="Helical" evidence="1">
    <location>
        <begin position="6"/>
        <end position="26"/>
    </location>
</feature>
<feature type="transmembrane region" description="Helical" evidence="1">
    <location>
        <begin position="48"/>
        <end position="68"/>
    </location>
</feature>
<feature type="transmembrane region" description="Helical" evidence="1">
    <location>
        <begin position="88"/>
        <end position="108"/>
    </location>
</feature>
<feature type="transmembrane region" description="Helical" evidence="1">
    <location>
        <begin position="267"/>
        <end position="289"/>
    </location>
</feature>
<feature type="transmembrane region" description="Helical" evidence="1">
    <location>
        <begin position="305"/>
        <end position="325"/>
    </location>
</feature>
<feature type="transmembrane region" description="Helical" evidence="1">
    <location>
        <begin position="329"/>
        <end position="349"/>
    </location>
</feature>
<feature type="transmembrane region" description="Helical" evidence="1">
    <location>
        <begin position="368"/>
        <end position="388"/>
    </location>
</feature>
<keyword id="KW-0256">Endoplasmic reticulum</keyword>
<keyword id="KW-0406">Ion transport</keyword>
<keyword id="KW-0472">Membrane</keyword>
<keyword id="KW-1185">Reference proteome</keyword>
<keyword id="KW-0812">Transmembrane</keyword>
<keyword id="KW-1133">Transmembrane helix</keyword>
<keyword id="KW-0813">Transport</keyword>
<keyword id="KW-0862">Zinc</keyword>
<keyword id="KW-0864">Zinc transport</keyword>
<dbReference type="EMBL" id="CU329672">
    <property type="protein sequence ID" value="CAA22478.2"/>
    <property type="molecule type" value="Genomic_DNA"/>
</dbReference>
<dbReference type="PIR" id="T40913">
    <property type="entry name" value="T40913"/>
</dbReference>
<dbReference type="RefSeq" id="NP_588452.2">
    <property type="nucleotide sequence ID" value="NM_001023443.2"/>
</dbReference>
<dbReference type="SMR" id="O94402"/>
<dbReference type="BioGRID" id="275870">
    <property type="interactions" value="20"/>
</dbReference>
<dbReference type="FunCoup" id="O94402">
    <property type="interactions" value="23"/>
</dbReference>
<dbReference type="STRING" id="284812.O94402"/>
<dbReference type="TCDB" id="2.A.5.5.4">
    <property type="family name" value="the zinc (zn(2+))-iron (fe(2+)) permease (zip) family"/>
</dbReference>
<dbReference type="iPTMnet" id="O94402"/>
<dbReference type="PaxDb" id="4896-SPCC126.09.1"/>
<dbReference type="EnsemblFungi" id="SPCC126.09.1">
    <property type="protein sequence ID" value="SPCC126.09.1:pep"/>
    <property type="gene ID" value="SPCC126.09"/>
</dbReference>
<dbReference type="GeneID" id="2539302"/>
<dbReference type="KEGG" id="spo:2539302"/>
<dbReference type="PomBase" id="SPCC126.09">
    <property type="gene designation" value="zip2"/>
</dbReference>
<dbReference type="VEuPathDB" id="FungiDB:SPCC126.09"/>
<dbReference type="eggNOG" id="KOG2474">
    <property type="taxonomic scope" value="Eukaryota"/>
</dbReference>
<dbReference type="HOGENOM" id="CLU_710103_0_0_1"/>
<dbReference type="InParanoid" id="O94402"/>
<dbReference type="PRO" id="PR:O94402"/>
<dbReference type="Proteomes" id="UP000002485">
    <property type="component" value="Chromosome III"/>
</dbReference>
<dbReference type="GO" id="GO:0005783">
    <property type="term" value="C:endoplasmic reticulum"/>
    <property type="evidence" value="ECO:0007005"/>
    <property type="project" value="PomBase"/>
</dbReference>
<dbReference type="GO" id="GO:0005789">
    <property type="term" value="C:endoplasmic reticulum membrane"/>
    <property type="evidence" value="ECO:0000314"/>
    <property type="project" value="PomBase"/>
</dbReference>
<dbReference type="GO" id="GO:0000329">
    <property type="term" value="C:fungal-type vacuole membrane"/>
    <property type="evidence" value="ECO:0000318"/>
    <property type="project" value="GO_Central"/>
</dbReference>
<dbReference type="GO" id="GO:0005385">
    <property type="term" value="F:zinc ion transmembrane transporter activity"/>
    <property type="evidence" value="ECO:0000318"/>
    <property type="project" value="GO_Central"/>
</dbReference>
<dbReference type="GO" id="GO:0006882">
    <property type="term" value="P:intracellular zinc ion homeostasis"/>
    <property type="evidence" value="ECO:0000266"/>
    <property type="project" value="PomBase"/>
</dbReference>
<dbReference type="GO" id="GO:0140147">
    <property type="term" value="P:zinc ion export from vacuole"/>
    <property type="evidence" value="ECO:0000266"/>
    <property type="project" value="PomBase"/>
</dbReference>
<dbReference type="GO" id="GO:0071577">
    <property type="term" value="P:zinc ion transmembrane transport"/>
    <property type="evidence" value="ECO:0000318"/>
    <property type="project" value="GO_Central"/>
</dbReference>
<dbReference type="InterPro" id="IPR003689">
    <property type="entry name" value="ZIP"/>
</dbReference>
<dbReference type="PANTHER" id="PTHR11040:SF210">
    <property type="entry name" value="ZINC-REGULATED TRANSPORTER 3"/>
    <property type="match status" value="1"/>
</dbReference>
<dbReference type="PANTHER" id="PTHR11040">
    <property type="entry name" value="ZINC/IRON TRANSPORTER"/>
    <property type="match status" value="1"/>
</dbReference>
<dbReference type="Pfam" id="PF02535">
    <property type="entry name" value="Zip"/>
    <property type="match status" value="1"/>
</dbReference>
<evidence type="ECO:0000255" key="1"/>
<evidence type="ECO:0000269" key="2">
    <source>
    </source>
</evidence>
<evidence type="ECO:0000269" key="3">
    <source>
    </source>
</evidence>
<evidence type="ECO:0000305" key="4"/>
<sequence>MNNSKGWILSLSINAFCVFGASGIYLDKLVNKWFGYEVLDLANSDNALVTGLATSSGILLYSSWASVMQESFHFLEKISMFDTFLVRVFQFCAFFFGGIVFYIFNHFLHKWLHESSQTGFLHDHFSVSDPSPSTAQNHRSPPASCKRLSSCESSGSPSSRVVGSLQGSYCPSGTHLHEGSLLLEDSSARHSSDSVHEYLVKKPSNCDCECHAHFSSFPTHSGTPDDIEHIHSVYTMGIQTALLICLHKVPEGFITFLASTVDTGFMVLVAMSIHNIVEGFTIAYPLYLAWKSRPKAFLTAATLSSCSLPLGSLIAFLVMEAGGIGSSDFLNFLYGIIFAGTAGMMLILSLRVILPEALRHDHSENKRHSFICFTIGILFTLFLEIFDSH</sequence>
<proteinExistence type="inferred from homology"/>
<comment type="function">
    <text evidence="3">Probable zinc transporter that may mediate zinc remobilization from the endoplasmic reticulum under zinc limitation.</text>
</comment>
<comment type="subcellular location">
    <subcellularLocation>
        <location evidence="2">Endoplasmic reticulum membrane</location>
        <topology evidence="2">Multi-pass membrane protein</topology>
    </subcellularLocation>
</comment>
<comment type="similarity">
    <text evidence="4">Belongs to the ZIP transporter (TC 2.A.5) family.</text>
</comment>
<accession>O94402</accession>
<reference key="1">
    <citation type="journal article" date="2002" name="Nature">
        <title>The genome sequence of Schizosaccharomyces pombe.</title>
        <authorList>
            <person name="Wood V."/>
            <person name="Gwilliam R."/>
            <person name="Rajandream M.A."/>
            <person name="Lyne M.H."/>
            <person name="Lyne R."/>
            <person name="Stewart A."/>
            <person name="Sgouros J.G."/>
            <person name="Peat N."/>
            <person name="Hayles J."/>
            <person name="Baker S.G."/>
            <person name="Basham D."/>
            <person name="Bowman S."/>
            <person name="Brooks K."/>
            <person name="Brown D."/>
            <person name="Brown S."/>
            <person name="Chillingworth T."/>
            <person name="Churcher C.M."/>
            <person name="Collins M."/>
            <person name="Connor R."/>
            <person name="Cronin A."/>
            <person name="Davis P."/>
            <person name="Feltwell T."/>
            <person name="Fraser A."/>
            <person name="Gentles S."/>
            <person name="Goble A."/>
            <person name="Hamlin N."/>
            <person name="Harris D.E."/>
            <person name="Hidalgo J."/>
            <person name="Hodgson G."/>
            <person name="Holroyd S."/>
            <person name="Hornsby T."/>
            <person name="Howarth S."/>
            <person name="Huckle E.J."/>
            <person name="Hunt S."/>
            <person name="Jagels K."/>
            <person name="James K.D."/>
            <person name="Jones L."/>
            <person name="Jones M."/>
            <person name="Leather S."/>
            <person name="McDonald S."/>
            <person name="McLean J."/>
            <person name="Mooney P."/>
            <person name="Moule S."/>
            <person name="Mungall K.L."/>
            <person name="Murphy L.D."/>
            <person name="Niblett D."/>
            <person name="Odell C."/>
            <person name="Oliver K."/>
            <person name="O'Neil S."/>
            <person name="Pearson D."/>
            <person name="Quail M.A."/>
            <person name="Rabbinowitsch E."/>
            <person name="Rutherford K.M."/>
            <person name="Rutter S."/>
            <person name="Saunders D."/>
            <person name="Seeger K."/>
            <person name="Sharp S."/>
            <person name="Skelton J."/>
            <person name="Simmonds M.N."/>
            <person name="Squares R."/>
            <person name="Squares S."/>
            <person name="Stevens K."/>
            <person name="Taylor K."/>
            <person name="Taylor R.G."/>
            <person name="Tivey A."/>
            <person name="Walsh S.V."/>
            <person name="Warren T."/>
            <person name="Whitehead S."/>
            <person name="Woodward J.R."/>
            <person name="Volckaert G."/>
            <person name="Aert R."/>
            <person name="Robben J."/>
            <person name="Grymonprez B."/>
            <person name="Weltjens I."/>
            <person name="Vanstreels E."/>
            <person name="Rieger M."/>
            <person name="Schaefer M."/>
            <person name="Mueller-Auer S."/>
            <person name="Gabel C."/>
            <person name="Fuchs M."/>
            <person name="Duesterhoeft A."/>
            <person name="Fritzc C."/>
            <person name="Holzer E."/>
            <person name="Moestl D."/>
            <person name="Hilbert H."/>
            <person name="Borzym K."/>
            <person name="Langer I."/>
            <person name="Beck A."/>
            <person name="Lehrach H."/>
            <person name="Reinhardt R."/>
            <person name="Pohl T.M."/>
            <person name="Eger P."/>
            <person name="Zimmermann W."/>
            <person name="Wedler H."/>
            <person name="Wambutt R."/>
            <person name="Purnelle B."/>
            <person name="Goffeau A."/>
            <person name="Cadieu E."/>
            <person name="Dreano S."/>
            <person name="Gloux S."/>
            <person name="Lelaure V."/>
            <person name="Mottier S."/>
            <person name="Galibert F."/>
            <person name="Aves S.J."/>
            <person name="Xiang Z."/>
            <person name="Hunt C."/>
            <person name="Moore K."/>
            <person name="Hurst S.M."/>
            <person name="Lucas M."/>
            <person name="Rochet M."/>
            <person name="Gaillardin C."/>
            <person name="Tallada V.A."/>
            <person name="Garzon A."/>
            <person name="Thode G."/>
            <person name="Daga R.R."/>
            <person name="Cruzado L."/>
            <person name="Jimenez J."/>
            <person name="Sanchez M."/>
            <person name="del Rey F."/>
            <person name="Benito J."/>
            <person name="Dominguez A."/>
            <person name="Revuelta J.L."/>
            <person name="Moreno S."/>
            <person name="Armstrong J."/>
            <person name="Forsburg S.L."/>
            <person name="Cerutti L."/>
            <person name="Lowe T."/>
            <person name="McCombie W.R."/>
            <person name="Paulsen I."/>
            <person name="Potashkin J."/>
            <person name="Shpakovski G.V."/>
            <person name="Ussery D."/>
            <person name="Barrell B.G."/>
            <person name="Nurse P."/>
        </authorList>
    </citation>
    <scope>NUCLEOTIDE SEQUENCE [LARGE SCALE GENOMIC DNA]</scope>
    <source>
        <strain>972 / ATCC 24843</strain>
    </source>
</reference>
<reference key="2">
    <citation type="journal article" date="2011" name="Science">
        <title>Comparative functional genomics of the fission yeasts.</title>
        <authorList>
            <person name="Rhind N."/>
            <person name="Chen Z."/>
            <person name="Yassour M."/>
            <person name="Thompson D.A."/>
            <person name="Haas B.J."/>
            <person name="Habib N."/>
            <person name="Wapinski I."/>
            <person name="Roy S."/>
            <person name="Lin M.F."/>
            <person name="Heiman D.I."/>
            <person name="Young S.K."/>
            <person name="Furuya K."/>
            <person name="Guo Y."/>
            <person name="Pidoux A."/>
            <person name="Chen H.M."/>
            <person name="Robbertse B."/>
            <person name="Goldberg J.M."/>
            <person name="Aoki K."/>
            <person name="Bayne E.H."/>
            <person name="Berlin A.M."/>
            <person name="Desjardins C.A."/>
            <person name="Dobbs E."/>
            <person name="Dukaj L."/>
            <person name="Fan L."/>
            <person name="FitzGerald M.G."/>
            <person name="French C."/>
            <person name="Gujja S."/>
            <person name="Hansen K."/>
            <person name="Keifenheim D."/>
            <person name="Levin J.Z."/>
            <person name="Mosher R.A."/>
            <person name="Mueller C.A."/>
            <person name="Pfiffner J."/>
            <person name="Priest M."/>
            <person name="Russ C."/>
            <person name="Smialowska A."/>
            <person name="Swoboda P."/>
            <person name="Sykes S.M."/>
            <person name="Vaughn M."/>
            <person name="Vengrova S."/>
            <person name="Yoder R."/>
            <person name="Zeng Q."/>
            <person name="Allshire R."/>
            <person name="Baulcombe D."/>
            <person name="Birren B.W."/>
            <person name="Brown W."/>
            <person name="Ekwall K."/>
            <person name="Kellis M."/>
            <person name="Leatherwood J."/>
            <person name="Levin H."/>
            <person name="Margalit H."/>
            <person name="Martienssen R."/>
            <person name="Nieduszynski C.A."/>
            <person name="Spatafora J.W."/>
            <person name="Friedman N."/>
            <person name="Dalgaard J.Z."/>
            <person name="Baumann P."/>
            <person name="Niki H."/>
            <person name="Regev A."/>
            <person name="Nusbaum C."/>
        </authorList>
    </citation>
    <scope>REVISION OF GENE MODEL</scope>
</reference>
<reference key="3">
    <citation type="journal article" date="2006" name="Nat. Biotechnol.">
        <title>ORFeome cloning and global analysis of protein localization in the fission yeast Schizosaccharomyces pombe.</title>
        <authorList>
            <person name="Matsuyama A."/>
            <person name="Arai R."/>
            <person name="Yashiroda Y."/>
            <person name="Shirai A."/>
            <person name="Kamata A."/>
            <person name="Sekido S."/>
            <person name="Kobayashi Y."/>
            <person name="Hashimoto A."/>
            <person name="Hamamoto M."/>
            <person name="Hiraoka Y."/>
            <person name="Horinouchi S."/>
            <person name="Yoshida M."/>
        </authorList>
    </citation>
    <scope>SUBCELLULAR LOCATION [LARGE SCALE ANALYSIS]</scope>
</reference>
<reference key="4">
    <citation type="journal article" date="2008" name="FEMS Yeast Res.">
        <title>Loss of Zhf and the tightly regulated zinc-uptake system SpZrt1 in Schizosaccharomyces pombe reveals the delicacy of cellular zinc balance.</title>
        <authorList>
            <person name="Boch A."/>
            <person name="Trampczynska A."/>
            <person name="Simm C."/>
            <person name="Taudte N."/>
            <person name="Kramer U."/>
            <person name="Clemens S."/>
        </authorList>
    </citation>
    <scope>FUNCTION</scope>
</reference>
<protein>
    <recommendedName>
        <fullName>Probable zinc transporter zip2</fullName>
    </recommendedName>
</protein>
<organism>
    <name type="scientific">Schizosaccharomyces pombe (strain 972 / ATCC 24843)</name>
    <name type="common">Fission yeast</name>
    <dbReference type="NCBI Taxonomy" id="284812"/>
    <lineage>
        <taxon>Eukaryota</taxon>
        <taxon>Fungi</taxon>
        <taxon>Dikarya</taxon>
        <taxon>Ascomycota</taxon>
        <taxon>Taphrinomycotina</taxon>
        <taxon>Schizosaccharomycetes</taxon>
        <taxon>Schizosaccharomycetales</taxon>
        <taxon>Schizosaccharomycetaceae</taxon>
        <taxon>Schizosaccharomyces</taxon>
    </lineage>
</organism>
<name>ZIP2_SCHPO</name>
<gene>
    <name type="primary">zip2</name>
    <name type="ORF">SPCC126.09</name>
</gene>